<evidence type="ECO:0000255" key="1">
    <source>
        <dbReference type="HAMAP-Rule" id="MF_01356"/>
    </source>
</evidence>
<reference key="1">
    <citation type="journal article" date="2008" name="Science">
        <title>Genome of an endosymbiont coupling N2 fixation to cellulolysis within RT protist cells in termite gut.</title>
        <authorList>
            <person name="Hongoh Y."/>
            <person name="Sharma V.K."/>
            <person name="Prakash T."/>
            <person name="Noda S."/>
            <person name="Toh H."/>
            <person name="Taylor T.D."/>
            <person name="Kudo T."/>
            <person name="Sakaki Y."/>
            <person name="Toyoda A."/>
            <person name="Hattori M."/>
            <person name="Ohkuma M."/>
        </authorList>
    </citation>
    <scope>NUCLEOTIDE SEQUENCE [LARGE SCALE GENOMIC DNA]</scope>
</reference>
<name>NUOB_AZOPC</name>
<organism>
    <name type="scientific">Azobacteroides pseudotrichonymphae genomovar. CFP2</name>
    <dbReference type="NCBI Taxonomy" id="511995"/>
    <lineage>
        <taxon>Bacteria</taxon>
        <taxon>Pseudomonadati</taxon>
        <taxon>Bacteroidota</taxon>
        <taxon>Bacteroidia</taxon>
        <taxon>Bacteroidales</taxon>
        <taxon>Candidatus Azobacteroides</taxon>
    </lineage>
</organism>
<proteinExistence type="inferred from homology"/>
<keyword id="KW-0004">4Fe-4S</keyword>
<keyword id="KW-0997">Cell inner membrane</keyword>
<keyword id="KW-1003">Cell membrane</keyword>
<keyword id="KW-0408">Iron</keyword>
<keyword id="KW-0411">Iron-sulfur</keyword>
<keyword id="KW-0472">Membrane</keyword>
<keyword id="KW-0479">Metal-binding</keyword>
<keyword id="KW-0520">NAD</keyword>
<keyword id="KW-0874">Quinone</keyword>
<keyword id="KW-1185">Reference proteome</keyword>
<keyword id="KW-1278">Translocase</keyword>
<keyword id="KW-0813">Transport</keyword>
<protein>
    <recommendedName>
        <fullName evidence="1">NADH-quinone oxidoreductase subunit B</fullName>
        <ecNumber evidence="1">7.1.1.-</ecNumber>
    </recommendedName>
    <alternativeName>
        <fullName evidence="1">NADH dehydrogenase I subunit B</fullName>
    </alternativeName>
    <alternativeName>
        <fullName evidence="1">NDH-1 subunit B</fullName>
    </alternativeName>
</protein>
<gene>
    <name evidence="1" type="primary">nuoB</name>
    <name type="ordered locus">CFPG_418</name>
</gene>
<sequence length="191" mass="21580">MKTEDFRDNEYLEEYLKELWGNGANIAIAKLNDLINWGRSNSVWPLTFATSCCGIEFMCLGAARYDFARFGWEVTRNSPRQADVVFCCGTIVHKMAPVLKRLYDQMSEPKYVIALGSCAISGGPFKSSYHTIMGIDKIIPVDVYIPGCPPRPDAMIYGMIQLARKIKVQNFFKLPNLSHIEGNSLKKGERQ</sequence>
<accession>B6YR59</accession>
<feature type="chain" id="PRO_0000376126" description="NADH-quinone oxidoreductase subunit B">
    <location>
        <begin position="1"/>
        <end position="191"/>
    </location>
</feature>
<feature type="binding site" evidence="1">
    <location>
        <position position="52"/>
    </location>
    <ligand>
        <name>[4Fe-4S] cluster</name>
        <dbReference type="ChEBI" id="CHEBI:49883"/>
    </ligand>
</feature>
<feature type="binding site" evidence="1">
    <location>
        <position position="53"/>
    </location>
    <ligand>
        <name>[4Fe-4S] cluster</name>
        <dbReference type="ChEBI" id="CHEBI:49883"/>
    </ligand>
</feature>
<feature type="binding site" evidence="1">
    <location>
        <position position="118"/>
    </location>
    <ligand>
        <name>[4Fe-4S] cluster</name>
        <dbReference type="ChEBI" id="CHEBI:49883"/>
    </ligand>
</feature>
<feature type="binding site" evidence="1">
    <location>
        <position position="148"/>
    </location>
    <ligand>
        <name>[4Fe-4S] cluster</name>
        <dbReference type="ChEBI" id="CHEBI:49883"/>
    </ligand>
</feature>
<dbReference type="EC" id="7.1.1.-" evidence="1"/>
<dbReference type="EMBL" id="AP010656">
    <property type="protein sequence ID" value="BAG83681.1"/>
    <property type="molecule type" value="Genomic_DNA"/>
</dbReference>
<dbReference type="SMR" id="B6YR59"/>
<dbReference type="STRING" id="511995.CFPG_418"/>
<dbReference type="KEGG" id="aps:CFPG_418"/>
<dbReference type="eggNOG" id="COG0377">
    <property type="taxonomic scope" value="Bacteria"/>
</dbReference>
<dbReference type="HOGENOM" id="CLU_055737_7_3_10"/>
<dbReference type="Proteomes" id="UP000000723">
    <property type="component" value="Chromosome"/>
</dbReference>
<dbReference type="GO" id="GO:0005886">
    <property type="term" value="C:plasma membrane"/>
    <property type="evidence" value="ECO:0007669"/>
    <property type="project" value="UniProtKB-SubCell"/>
</dbReference>
<dbReference type="GO" id="GO:0045271">
    <property type="term" value="C:respiratory chain complex I"/>
    <property type="evidence" value="ECO:0007669"/>
    <property type="project" value="TreeGrafter"/>
</dbReference>
<dbReference type="GO" id="GO:0051539">
    <property type="term" value="F:4 iron, 4 sulfur cluster binding"/>
    <property type="evidence" value="ECO:0007669"/>
    <property type="project" value="UniProtKB-KW"/>
</dbReference>
<dbReference type="GO" id="GO:0005506">
    <property type="term" value="F:iron ion binding"/>
    <property type="evidence" value="ECO:0007669"/>
    <property type="project" value="UniProtKB-UniRule"/>
</dbReference>
<dbReference type="GO" id="GO:0008137">
    <property type="term" value="F:NADH dehydrogenase (ubiquinone) activity"/>
    <property type="evidence" value="ECO:0007669"/>
    <property type="project" value="InterPro"/>
</dbReference>
<dbReference type="GO" id="GO:0050136">
    <property type="term" value="F:NADH:ubiquinone reductase (non-electrogenic) activity"/>
    <property type="evidence" value="ECO:0007669"/>
    <property type="project" value="UniProtKB-UniRule"/>
</dbReference>
<dbReference type="GO" id="GO:0048038">
    <property type="term" value="F:quinone binding"/>
    <property type="evidence" value="ECO:0007669"/>
    <property type="project" value="UniProtKB-KW"/>
</dbReference>
<dbReference type="GO" id="GO:0009060">
    <property type="term" value="P:aerobic respiration"/>
    <property type="evidence" value="ECO:0007669"/>
    <property type="project" value="TreeGrafter"/>
</dbReference>
<dbReference type="GO" id="GO:0015990">
    <property type="term" value="P:electron transport coupled proton transport"/>
    <property type="evidence" value="ECO:0007669"/>
    <property type="project" value="TreeGrafter"/>
</dbReference>
<dbReference type="FunFam" id="3.40.50.12280:FF:000002">
    <property type="entry name" value="NADH-quinone oxidoreductase subunit B"/>
    <property type="match status" value="1"/>
</dbReference>
<dbReference type="Gene3D" id="3.40.50.12280">
    <property type="match status" value="1"/>
</dbReference>
<dbReference type="HAMAP" id="MF_01356">
    <property type="entry name" value="NDH1_NuoB"/>
    <property type="match status" value="1"/>
</dbReference>
<dbReference type="InterPro" id="IPR006137">
    <property type="entry name" value="NADH_UbQ_OxRdtase-like_20kDa"/>
</dbReference>
<dbReference type="InterPro" id="IPR006138">
    <property type="entry name" value="NADH_UQ_OxRdtase_20Kd_su"/>
</dbReference>
<dbReference type="NCBIfam" id="TIGR01957">
    <property type="entry name" value="nuoB_fam"/>
    <property type="match status" value="1"/>
</dbReference>
<dbReference type="NCBIfam" id="NF005012">
    <property type="entry name" value="PRK06411.1"/>
    <property type="match status" value="1"/>
</dbReference>
<dbReference type="NCBIfam" id="NF011391">
    <property type="entry name" value="PRK14816.1"/>
    <property type="match status" value="1"/>
</dbReference>
<dbReference type="PANTHER" id="PTHR11995">
    <property type="entry name" value="NADH DEHYDROGENASE"/>
    <property type="match status" value="1"/>
</dbReference>
<dbReference type="PANTHER" id="PTHR11995:SF14">
    <property type="entry name" value="NADH DEHYDROGENASE [UBIQUINONE] IRON-SULFUR PROTEIN 7, MITOCHONDRIAL"/>
    <property type="match status" value="1"/>
</dbReference>
<dbReference type="Pfam" id="PF01058">
    <property type="entry name" value="Oxidored_q6"/>
    <property type="match status" value="1"/>
</dbReference>
<dbReference type="SUPFAM" id="SSF56770">
    <property type="entry name" value="HydA/Nqo6-like"/>
    <property type="match status" value="1"/>
</dbReference>
<dbReference type="PROSITE" id="PS01150">
    <property type="entry name" value="COMPLEX1_20K"/>
    <property type="match status" value="1"/>
</dbReference>
<comment type="function">
    <text evidence="1">NDH-1 shuttles electrons from NADH, via FMN and iron-sulfur (Fe-S) centers, to quinones in the respiratory chain. The immediate electron acceptor for the enzyme in this species is believed to be a menaquinone. Couples the redox reaction to proton translocation (for every two electrons transferred, four hydrogen ions are translocated across the cytoplasmic membrane), and thus conserves the redox energy in a proton gradient.</text>
</comment>
<comment type="catalytic activity">
    <reaction evidence="1">
        <text>a quinone + NADH + 5 H(+)(in) = a quinol + NAD(+) + 4 H(+)(out)</text>
        <dbReference type="Rhea" id="RHEA:57888"/>
        <dbReference type="ChEBI" id="CHEBI:15378"/>
        <dbReference type="ChEBI" id="CHEBI:24646"/>
        <dbReference type="ChEBI" id="CHEBI:57540"/>
        <dbReference type="ChEBI" id="CHEBI:57945"/>
        <dbReference type="ChEBI" id="CHEBI:132124"/>
    </reaction>
</comment>
<comment type="cofactor">
    <cofactor evidence="1">
        <name>[4Fe-4S] cluster</name>
        <dbReference type="ChEBI" id="CHEBI:49883"/>
    </cofactor>
    <text evidence="1">Binds 1 [4Fe-4S] cluster.</text>
</comment>
<comment type="subunit">
    <text evidence="1">NDH-1 is composed of 14 different subunits. Subunits NuoB, C, D, E, F, and G constitute the peripheral sector of the complex.</text>
</comment>
<comment type="subcellular location">
    <subcellularLocation>
        <location evidence="1">Cell inner membrane</location>
        <topology evidence="1">Peripheral membrane protein</topology>
        <orientation evidence="1">Cytoplasmic side</orientation>
    </subcellularLocation>
</comment>
<comment type="similarity">
    <text evidence="1">Belongs to the complex I 20 kDa subunit family.</text>
</comment>